<comment type="function">
    <text evidence="1">Critical mediator, in cooperation with CASP4, of endoplasmic reticulum-stress induced apoptosis. Required or the activation of CASP4 following endoplasmic reticulum stress (By similarity).</text>
</comment>
<comment type="subunit">
    <text evidence="1">Constitutively interacts with CASP4; required for the localization of procaspase 4 to the ER.</text>
</comment>
<comment type="subcellular location">
    <subcellularLocation>
        <location evidence="1">Endoplasmic reticulum membrane</location>
        <topology evidence="1">Multi-pass membrane protein</topology>
    </subcellularLocation>
</comment>
<comment type="similarity">
    <text evidence="5">Belongs to the TMEM214 family.</text>
</comment>
<gene>
    <name type="primary">TMEM214</name>
</gene>
<keyword id="KW-0007">Acetylation</keyword>
<keyword id="KW-0053">Apoptosis</keyword>
<keyword id="KW-0256">Endoplasmic reticulum</keyword>
<keyword id="KW-0325">Glycoprotein</keyword>
<keyword id="KW-0472">Membrane</keyword>
<keyword id="KW-1185">Reference proteome</keyword>
<keyword id="KW-0812">Transmembrane</keyword>
<keyword id="KW-1133">Transmembrane helix</keyword>
<proteinExistence type="evidence at transcript level"/>
<dbReference type="EMBL" id="BC123724">
    <property type="protein sequence ID" value="AAI23725.1"/>
    <property type="molecule type" value="mRNA"/>
</dbReference>
<dbReference type="RefSeq" id="NP_001076901.1">
    <property type="nucleotide sequence ID" value="NM_001083432.1"/>
</dbReference>
<dbReference type="FunCoup" id="A4FV45">
    <property type="interactions" value="3170"/>
</dbReference>
<dbReference type="STRING" id="9913.ENSBTAP00000023162"/>
<dbReference type="GlyCosmos" id="A4FV45">
    <property type="glycosylation" value="2 sites, No reported glycans"/>
</dbReference>
<dbReference type="GlyGen" id="A4FV45">
    <property type="glycosylation" value="2 sites"/>
</dbReference>
<dbReference type="PaxDb" id="9913-ENSBTAP00000023162"/>
<dbReference type="PeptideAtlas" id="A4FV45"/>
<dbReference type="Ensembl" id="ENSBTAT00000023162.6">
    <property type="protein sequence ID" value="ENSBTAP00000023162.4"/>
    <property type="gene ID" value="ENSBTAG00000017423.6"/>
</dbReference>
<dbReference type="GeneID" id="514683"/>
<dbReference type="KEGG" id="bta:514683"/>
<dbReference type="CTD" id="54867"/>
<dbReference type="VEuPathDB" id="HostDB:ENSBTAG00000017423"/>
<dbReference type="VGNC" id="VGNC:36036">
    <property type="gene designation" value="TMEM214"/>
</dbReference>
<dbReference type="eggNOG" id="KOG4467">
    <property type="taxonomic scope" value="Eukaryota"/>
</dbReference>
<dbReference type="GeneTree" id="ENSGT00390000002693"/>
<dbReference type="HOGENOM" id="CLU_025330_1_0_1"/>
<dbReference type="InParanoid" id="A4FV45"/>
<dbReference type="OMA" id="NGSAGKW"/>
<dbReference type="OrthoDB" id="10022292at2759"/>
<dbReference type="TreeFam" id="TF329489"/>
<dbReference type="Proteomes" id="UP000009136">
    <property type="component" value="Chromosome 11"/>
</dbReference>
<dbReference type="Bgee" id="ENSBTAG00000017423">
    <property type="expression patterns" value="Expressed in saliva-secreting gland and 106 other cell types or tissues"/>
</dbReference>
<dbReference type="GO" id="GO:0005881">
    <property type="term" value="C:cytoplasmic microtubule"/>
    <property type="evidence" value="ECO:0000250"/>
    <property type="project" value="UniProtKB"/>
</dbReference>
<dbReference type="GO" id="GO:0005783">
    <property type="term" value="C:endoplasmic reticulum"/>
    <property type="evidence" value="ECO:0000318"/>
    <property type="project" value="GO_Central"/>
</dbReference>
<dbReference type="GO" id="GO:0005789">
    <property type="term" value="C:endoplasmic reticulum membrane"/>
    <property type="evidence" value="ECO:0007669"/>
    <property type="project" value="UniProtKB-SubCell"/>
</dbReference>
<dbReference type="GO" id="GO:0005794">
    <property type="term" value="C:Golgi apparatus"/>
    <property type="evidence" value="ECO:0000318"/>
    <property type="project" value="GO_Central"/>
</dbReference>
<dbReference type="GO" id="GO:0006915">
    <property type="term" value="P:apoptotic process"/>
    <property type="evidence" value="ECO:0007669"/>
    <property type="project" value="UniProtKB-KW"/>
</dbReference>
<dbReference type="InterPro" id="IPR019308">
    <property type="entry name" value="TMEM214"/>
</dbReference>
<dbReference type="PANTHER" id="PTHR13448">
    <property type="entry name" value="TRANSMEMBRANE PROTEIN 214"/>
    <property type="match status" value="1"/>
</dbReference>
<dbReference type="PANTHER" id="PTHR13448:SF0">
    <property type="entry name" value="TRANSMEMBRANE PROTEIN 214"/>
    <property type="match status" value="1"/>
</dbReference>
<dbReference type="Pfam" id="PF10151">
    <property type="entry name" value="TMEM214"/>
    <property type="match status" value="1"/>
</dbReference>
<name>TM214_BOVIN</name>
<sequence>MAAKTAGGGRWEVVKKGRRPGAGGSGKGGGGDRRALGEANGVWKYDLTPPIQTTSTLYERGFEKIMKRQNKEQVPPPAVEPKKPGNKKQAKKVATLTNQNQKQGRFRSLEEALKALDLADLQKELDKSQSVFSGNPSVWLKDLASYLNYKLQVPPSEPTLSQHPHDYPYSLVSRELRGIIRGLLAKAAGSLELFFDHCLFTMLQELDKTPGESLHGYRICIQAILQDKPKIVTTNLGKFLELLRSHQSRPAKCLTIMWALGQAGFTNLTEGLRVWLGIMLPVLGIKSLSPFAIAYLDRLLLMHPNLTKGFGMIGPKDLFPLLDFAYMPNNSLTPSLQEQLCQLYPRLKVLAFGAKPESTLHTYFPSFLSRATPGCPLEMKKELLRSLTECLMVDPLSTSVWRQLYPKHLSQSSLLLEHLLRSWERIPKKTQKSLQETIQSFKLTNQDLLRKGGGSNQDVVTCDSACKSLLQQARGFQLPWTRLLLLVLVFAIGFLCHDFRSHSSFQASLSGQLLQSSGVLPAGQQACTKIYSYSLQGYSWLEKTLPAWGSHLLTVVRPGLQLAWAHTNATVGFLSAHCASHLAWFGDSLANLFQRLQTQLPDTLNQLLRSLRELLLFLYHSILLPTWHMLLEALAQIQEHCHEACRGEVTWDCMKTQLSEAAHWTWLRLQDTTVAFLDWALAMISQQ</sequence>
<organism>
    <name type="scientific">Bos taurus</name>
    <name type="common">Bovine</name>
    <dbReference type="NCBI Taxonomy" id="9913"/>
    <lineage>
        <taxon>Eukaryota</taxon>
        <taxon>Metazoa</taxon>
        <taxon>Chordata</taxon>
        <taxon>Craniata</taxon>
        <taxon>Vertebrata</taxon>
        <taxon>Euteleostomi</taxon>
        <taxon>Mammalia</taxon>
        <taxon>Eutheria</taxon>
        <taxon>Laurasiatheria</taxon>
        <taxon>Artiodactyla</taxon>
        <taxon>Ruminantia</taxon>
        <taxon>Pecora</taxon>
        <taxon>Bovidae</taxon>
        <taxon>Bovinae</taxon>
        <taxon>Bos</taxon>
    </lineage>
</organism>
<accession>A4FV45</accession>
<feature type="initiator methionine" description="Removed" evidence="2">
    <location>
        <position position="1"/>
    </location>
</feature>
<feature type="chain" id="PRO_0000321896" description="Transmembrane protein 214">
    <location>
        <begin position="2"/>
        <end position="687"/>
    </location>
</feature>
<feature type="transmembrane region" description="Helical" evidence="3">
    <location>
        <begin position="475"/>
        <end position="495"/>
    </location>
</feature>
<feature type="transmembrane region" description="Helical" evidence="3">
    <location>
        <begin position="614"/>
        <end position="634"/>
    </location>
</feature>
<feature type="region of interest" description="Disordered" evidence="4">
    <location>
        <begin position="1"/>
        <end position="36"/>
    </location>
</feature>
<feature type="region of interest" description="Disordered" evidence="4">
    <location>
        <begin position="68"/>
        <end position="94"/>
    </location>
</feature>
<feature type="compositionally biased region" description="Gly residues" evidence="4">
    <location>
        <begin position="1"/>
        <end position="10"/>
    </location>
</feature>
<feature type="compositionally biased region" description="Gly residues" evidence="4">
    <location>
        <begin position="20"/>
        <end position="29"/>
    </location>
</feature>
<feature type="modified residue" description="N-acetylalanine" evidence="2">
    <location>
        <position position="2"/>
    </location>
</feature>
<feature type="glycosylation site" description="N-linked (GlcNAc...) asparagine" evidence="3">
    <location>
        <position position="267"/>
    </location>
</feature>
<feature type="glycosylation site" description="N-linked (GlcNAc...) asparagine" evidence="3">
    <location>
        <position position="305"/>
    </location>
</feature>
<reference key="1">
    <citation type="submission" date="2006-09" db="EMBL/GenBank/DDBJ databases">
        <authorList>
            <consortium name="NIH - Mammalian Gene Collection (MGC) project"/>
        </authorList>
    </citation>
    <scope>NUCLEOTIDE SEQUENCE [LARGE SCALE MRNA]</scope>
    <source>
        <strain>Hereford</strain>
        <tissue>Ascending colon</tissue>
    </source>
</reference>
<evidence type="ECO:0000250" key="1"/>
<evidence type="ECO:0000250" key="2">
    <source>
        <dbReference type="UniProtKB" id="Q6NUQ4"/>
    </source>
</evidence>
<evidence type="ECO:0000255" key="3"/>
<evidence type="ECO:0000256" key="4">
    <source>
        <dbReference type="SAM" id="MobiDB-lite"/>
    </source>
</evidence>
<evidence type="ECO:0000305" key="5"/>
<protein>
    <recommendedName>
        <fullName>Transmembrane protein 214</fullName>
    </recommendedName>
</protein>